<proteinExistence type="inferred from homology"/>
<sequence>MIKPVQTELYAVIGNPVAHSLSPVMMNAAFRSMNVPATYLALQADELPEDLETLARFGFRGLSVTLPHKELAYRLADHVDDMARTIGAVNTLMREGSAWIGCNTDWLGATKALRRVTELEGREALILGAGGAARAVAFGMKREGARVTIANRCVEKGKALAKSFRCDFIPLAILDRARFDRHFDVVVQCTSVGLQGTIPTVLVSDSFFEPGMVVMETVYRPLRTPFLNAAKRAGATIVHGTDMLVYQGVAQLEWWLSRPIPEFPCVAAMKQAIHEVLSKEKNAQDD</sequence>
<accession>A0LLU7</accession>
<gene>
    <name evidence="1" type="primary">aroE</name>
    <name type="ordered locus">Sfum_2721</name>
</gene>
<protein>
    <recommendedName>
        <fullName evidence="1">Shikimate dehydrogenase (NADP(+))</fullName>
        <shortName evidence="1">SDH</shortName>
        <ecNumber evidence="1">1.1.1.25</ecNumber>
    </recommendedName>
</protein>
<name>AROE_SYNFM</name>
<reference key="1">
    <citation type="submission" date="2006-10" db="EMBL/GenBank/DDBJ databases">
        <title>Complete sequence of Syntrophobacter fumaroxidans MPOB.</title>
        <authorList>
            <consortium name="US DOE Joint Genome Institute"/>
            <person name="Copeland A."/>
            <person name="Lucas S."/>
            <person name="Lapidus A."/>
            <person name="Barry K."/>
            <person name="Detter J.C."/>
            <person name="Glavina del Rio T."/>
            <person name="Hammon N."/>
            <person name="Israni S."/>
            <person name="Pitluck S."/>
            <person name="Goltsman E.G."/>
            <person name="Martinez M."/>
            <person name="Schmutz J."/>
            <person name="Larimer F."/>
            <person name="Land M."/>
            <person name="Hauser L."/>
            <person name="Kyrpides N."/>
            <person name="Kim E."/>
            <person name="Boone D.R."/>
            <person name="Brockman F."/>
            <person name="Culley D."/>
            <person name="Ferry J."/>
            <person name="Gunsalus R."/>
            <person name="McInerney M.J."/>
            <person name="Morrison M."/>
            <person name="Plugge C."/>
            <person name="Rohlin L."/>
            <person name="Scholten J."/>
            <person name="Sieber J."/>
            <person name="Stams A.J.M."/>
            <person name="Worm P."/>
            <person name="Henstra A.M."/>
            <person name="Richardson P."/>
        </authorList>
    </citation>
    <scope>NUCLEOTIDE SEQUENCE [LARGE SCALE GENOMIC DNA]</scope>
    <source>
        <strain>DSM 10017 / MPOB</strain>
    </source>
</reference>
<comment type="function">
    <text evidence="1">Involved in the biosynthesis of the chorismate, which leads to the biosynthesis of aromatic amino acids. Catalyzes the reversible NADPH linked reduction of 3-dehydroshikimate (DHSA) to yield shikimate (SA).</text>
</comment>
<comment type="catalytic activity">
    <reaction evidence="1">
        <text>shikimate + NADP(+) = 3-dehydroshikimate + NADPH + H(+)</text>
        <dbReference type="Rhea" id="RHEA:17737"/>
        <dbReference type="ChEBI" id="CHEBI:15378"/>
        <dbReference type="ChEBI" id="CHEBI:16630"/>
        <dbReference type="ChEBI" id="CHEBI:36208"/>
        <dbReference type="ChEBI" id="CHEBI:57783"/>
        <dbReference type="ChEBI" id="CHEBI:58349"/>
        <dbReference type="EC" id="1.1.1.25"/>
    </reaction>
</comment>
<comment type="pathway">
    <text evidence="1">Metabolic intermediate biosynthesis; chorismate biosynthesis; chorismate from D-erythrose 4-phosphate and phosphoenolpyruvate: step 4/7.</text>
</comment>
<comment type="subunit">
    <text evidence="1">Homodimer.</text>
</comment>
<comment type="similarity">
    <text evidence="1">Belongs to the shikimate dehydrogenase family.</text>
</comment>
<organism>
    <name type="scientific">Syntrophobacter fumaroxidans (strain DSM 10017 / MPOB)</name>
    <dbReference type="NCBI Taxonomy" id="335543"/>
    <lineage>
        <taxon>Bacteria</taxon>
        <taxon>Pseudomonadati</taxon>
        <taxon>Thermodesulfobacteriota</taxon>
        <taxon>Syntrophobacteria</taxon>
        <taxon>Syntrophobacterales</taxon>
        <taxon>Syntrophobacteraceae</taxon>
        <taxon>Syntrophobacter</taxon>
    </lineage>
</organism>
<dbReference type="EC" id="1.1.1.25" evidence="1"/>
<dbReference type="EMBL" id="CP000478">
    <property type="protein sequence ID" value="ABK18399.1"/>
    <property type="molecule type" value="Genomic_DNA"/>
</dbReference>
<dbReference type="RefSeq" id="WP_011699566.1">
    <property type="nucleotide sequence ID" value="NC_008554.1"/>
</dbReference>
<dbReference type="SMR" id="A0LLU7"/>
<dbReference type="FunCoup" id="A0LLU7">
    <property type="interactions" value="186"/>
</dbReference>
<dbReference type="STRING" id="335543.Sfum_2721"/>
<dbReference type="KEGG" id="sfu:Sfum_2721"/>
<dbReference type="eggNOG" id="COG0169">
    <property type="taxonomic scope" value="Bacteria"/>
</dbReference>
<dbReference type="HOGENOM" id="CLU_044063_3_1_7"/>
<dbReference type="InParanoid" id="A0LLU7"/>
<dbReference type="OrthoDB" id="9792692at2"/>
<dbReference type="UniPathway" id="UPA00053">
    <property type="reaction ID" value="UER00087"/>
</dbReference>
<dbReference type="Proteomes" id="UP000001784">
    <property type="component" value="Chromosome"/>
</dbReference>
<dbReference type="GO" id="GO:0050661">
    <property type="term" value="F:NADP binding"/>
    <property type="evidence" value="ECO:0007669"/>
    <property type="project" value="InterPro"/>
</dbReference>
<dbReference type="GO" id="GO:0004764">
    <property type="term" value="F:shikimate 3-dehydrogenase (NADP+) activity"/>
    <property type="evidence" value="ECO:0007669"/>
    <property type="project" value="UniProtKB-UniRule"/>
</dbReference>
<dbReference type="GO" id="GO:0008652">
    <property type="term" value="P:amino acid biosynthetic process"/>
    <property type="evidence" value="ECO:0007669"/>
    <property type="project" value="UniProtKB-KW"/>
</dbReference>
<dbReference type="GO" id="GO:0009073">
    <property type="term" value="P:aromatic amino acid family biosynthetic process"/>
    <property type="evidence" value="ECO:0007669"/>
    <property type="project" value="UniProtKB-KW"/>
</dbReference>
<dbReference type="GO" id="GO:0009423">
    <property type="term" value="P:chorismate biosynthetic process"/>
    <property type="evidence" value="ECO:0007669"/>
    <property type="project" value="UniProtKB-UniRule"/>
</dbReference>
<dbReference type="GO" id="GO:0019632">
    <property type="term" value="P:shikimate metabolic process"/>
    <property type="evidence" value="ECO:0007669"/>
    <property type="project" value="InterPro"/>
</dbReference>
<dbReference type="CDD" id="cd01065">
    <property type="entry name" value="NAD_bind_Shikimate_DH"/>
    <property type="match status" value="1"/>
</dbReference>
<dbReference type="Gene3D" id="3.40.50.10860">
    <property type="entry name" value="Leucine Dehydrogenase, chain A, domain 1"/>
    <property type="match status" value="1"/>
</dbReference>
<dbReference type="Gene3D" id="3.40.50.720">
    <property type="entry name" value="NAD(P)-binding Rossmann-like Domain"/>
    <property type="match status" value="1"/>
</dbReference>
<dbReference type="HAMAP" id="MF_00222">
    <property type="entry name" value="Shikimate_DH_AroE"/>
    <property type="match status" value="1"/>
</dbReference>
<dbReference type="InterPro" id="IPR046346">
    <property type="entry name" value="Aminoacid_DH-like_N_sf"/>
</dbReference>
<dbReference type="InterPro" id="IPR036291">
    <property type="entry name" value="NAD(P)-bd_dom_sf"/>
</dbReference>
<dbReference type="InterPro" id="IPR041121">
    <property type="entry name" value="SDH_C"/>
</dbReference>
<dbReference type="InterPro" id="IPR011342">
    <property type="entry name" value="Shikimate_DH"/>
</dbReference>
<dbReference type="InterPro" id="IPR013708">
    <property type="entry name" value="Shikimate_DH-bd_N"/>
</dbReference>
<dbReference type="InterPro" id="IPR022893">
    <property type="entry name" value="Shikimate_DH_fam"/>
</dbReference>
<dbReference type="InterPro" id="IPR006151">
    <property type="entry name" value="Shikm_DH/Glu-tRNA_Rdtase"/>
</dbReference>
<dbReference type="NCBIfam" id="TIGR00507">
    <property type="entry name" value="aroE"/>
    <property type="match status" value="1"/>
</dbReference>
<dbReference type="PANTHER" id="PTHR21089:SF1">
    <property type="entry name" value="BIFUNCTIONAL 3-DEHYDROQUINATE DEHYDRATASE_SHIKIMATE DEHYDROGENASE, CHLOROPLASTIC"/>
    <property type="match status" value="1"/>
</dbReference>
<dbReference type="PANTHER" id="PTHR21089">
    <property type="entry name" value="SHIKIMATE DEHYDROGENASE"/>
    <property type="match status" value="1"/>
</dbReference>
<dbReference type="Pfam" id="PF18317">
    <property type="entry name" value="SDH_C"/>
    <property type="match status" value="1"/>
</dbReference>
<dbReference type="Pfam" id="PF01488">
    <property type="entry name" value="Shikimate_DH"/>
    <property type="match status" value="1"/>
</dbReference>
<dbReference type="Pfam" id="PF08501">
    <property type="entry name" value="Shikimate_dh_N"/>
    <property type="match status" value="1"/>
</dbReference>
<dbReference type="SUPFAM" id="SSF53223">
    <property type="entry name" value="Aminoacid dehydrogenase-like, N-terminal domain"/>
    <property type="match status" value="1"/>
</dbReference>
<dbReference type="SUPFAM" id="SSF51735">
    <property type="entry name" value="NAD(P)-binding Rossmann-fold domains"/>
    <property type="match status" value="1"/>
</dbReference>
<keyword id="KW-0028">Amino-acid biosynthesis</keyword>
<keyword id="KW-0057">Aromatic amino acid biosynthesis</keyword>
<keyword id="KW-0521">NADP</keyword>
<keyword id="KW-0560">Oxidoreductase</keyword>
<keyword id="KW-1185">Reference proteome</keyword>
<feature type="chain" id="PRO_0000325177" description="Shikimate dehydrogenase (NADP(+))">
    <location>
        <begin position="1"/>
        <end position="286"/>
    </location>
</feature>
<feature type="active site" description="Proton acceptor" evidence="1">
    <location>
        <position position="69"/>
    </location>
</feature>
<feature type="binding site" evidence="1">
    <location>
        <begin position="20"/>
        <end position="22"/>
    </location>
    <ligand>
        <name>shikimate</name>
        <dbReference type="ChEBI" id="CHEBI:36208"/>
    </ligand>
</feature>
<feature type="binding site" evidence="1">
    <location>
        <position position="65"/>
    </location>
    <ligand>
        <name>shikimate</name>
        <dbReference type="ChEBI" id="CHEBI:36208"/>
    </ligand>
</feature>
<feature type="binding site" evidence="1">
    <location>
        <position position="81"/>
    </location>
    <ligand>
        <name>NADP(+)</name>
        <dbReference type="ChEBI" id="CHEBI:58349"/>
    </ligand>
</feature>
<feature type="binding site" evidence="1">
    <location>
        <position position="90"/>
    </location>
    <ligand>
        <name>shikimate</name>
        <dbReference type="ChEBI" id="CHEBI:36208"/>
    </ligand>
</feature>
<feature type="binding site" evidence="1">
    <location>
        <position position="105"/>
    </location>
    <ligand>
        <name>shikimate</name>
        <dbReference type="ChEBI" id="CHEBI:36208"/>
    </ligand>
</feature>
<feature type="binding site" evidence="1">
    <location>
        <begin position="128"/>
        <end position="132"/>
    </location>
    <ligand>
        <name>NADP(+)</name>
        <dbReference type="ChEBI" id="CHEBI:58349"/>
    </ligand>
</feature>
<feature type="binding site" evidence="1">
    <location>
        <position position="217"/>
    </location>
    <ligand>
        <name>NADP(+)</name>
        <dbReference type="ChEBI" id="CHEBI:58349"/>
    </ligand>
</feature>
<feature type="binding site" evidence="1">
    <location>
        <position position="219"/>
    </location>
    <ligand>
        <name>shikimate</name>
        <dbReference type="ChEBI" id="CHEBI:36208"/>
    </ligand>
</feature>
<feature type="binding site" evidence="1">
    <location>
        <position position="240"/>
    </location>
    <ligand>
        <name>NADP(+)</name>
        <dbReference type="ChEBI" id="CHEBI:58349"/>
    </ligand>
</feature>
<evidence type="ECO:0000255" key="1">
    <source>
        <dbReference type="HAMAP-Rule" id="MF_00222"/>
    </source>
</evidence>